<feature type="chain" id="PRO_0000091089" description="Elongation factor G">
    <location>
        <begin position="1"/>
        <end position="694"/>
    </location>
</feature>
<feature type="domain" description="tr-type G">
    <location>
        <begin position="8"/>
        <end position="287"/>
    </location>
</feature>
<feature type="binding site" evidence="1">
    <location>
        <begin position="17"/>
        <end position="24"/>
    </location>
    <ligand>
        <name>GTP</name>
        <dbReference type="ChEBI" id="CHEBI:37565"/>
    </ligand>
</feature>
<feature type="binding site" evidence="1">
    <location>
        <begin position="86"/>
        <end position="90"/>
    </location>
    <ligand>
        <name>GTP</name>
        <dbReference type="ChEBI" id="CHEBI:37565"/>
    </ligand>
</feature>
<feature type="binding site" evidence="1">
    <location>
        <begin position="140"/>
        <end position="143"/>
    </location>
    <ligand>
        <name>GTP</name>
        <dbReference type="ChEBI" id="CHEBI:37565"/>
    </ligand>
</feature>
<comment type="function">
    <text evidence="1">Catalyzes the GTP-dependent ribosomal translocation step during translation elongation. During this step, the ribosome changes from the pre-translocational (PRE) to the post-translocational (POST) state as the newly formed A-site-bound peptidyl-tRNA and P-site-bound deacylated tRNA move to the P and E sites, respectively. Catalyzes the coordinated movement of the two tRNA molecules, the mRNA and conformational changes in the ribosome.</text>
</comment>
<comment type="subcellular location">
    <subcellularLocation>
        <location evidence="1">Cytoplasm</location>
    </subcellularLocation>
</comment>
<comment type="similarity">
    <text evidence="1">Belongs to the TRAFAC class translation factor GTPase superfamily. Classic translation factor GTPase family. EF-G/EF-2 subfamily.</text>
</comment>
<dbReference type="EMBL" id="AE014291">
    <property type="protein sequence ID" value="AAN30155.1"/>
    <property type="molecule type" value="Genomic_DNA"/>
</dbReference>
<dbReference type="EMBL" id="CP002997">
    <property type="protein sequence ID" value="AEM18573.1"/>
    <property type="molecule type" value="Genomic_DNA"/>
</dbReference>
<dbReference type="RefSeq" id="WP_004685700.1">
    <property type="nucleotide sequence ID" value="NZ_KN046804.1"/>
</dbReference>
<dbReference type="SMR" id="Q8G075"/>
<dbReference type="GeneID" id="97533522"/>
<dbReference type="KEGG" id="bms:BR1236"/>
<dbReference type="KEGG" id="bsi:BS1330_I1232"/>
<dbReference type="PATRIC" id="fig|204722.21.peg.3393"/>
<dbReference type="HOGENOM" id="CLU_002794_4_1_5"/>
<dbReference type="PhylomeDB" id="Q8G075"/>
<dbReference type="Proteomes" id="UP000007104">
    <property type="component" value="Chromosome I"/>
</dbReference>
<dbReference type="GO" id="GO:0005737">
    <property type="term" value="C:cytoplasm"/>
    <property type="evidence" value="ECO:0007669"/>
    <property type="project" value="UniProtKB-SubCell"/>
</dbReference>
<dbReference type="GO" id="GO:0005525">
    <property type="term" value="F:GTP binding"/>
    <property type="evidence" value="ECO:0007669"/>
    <property type="project" value="UniProtKB-UniRule"/>
</dbReference>
<dbReference type="GO" id="GO:0003924">
    <property type="term" value="F:GTPase activity"/>
    <property type="evidence" value="ECO:0007669"/>
    <property type="project" value="InterPro"/>
</dbReference>
<dbReference type="GO" id="GO:0097216">
    <property type="term" value="F:guanosine tetraphosphate binding"/>
    <property type="evidence" value="ECO:0007669"/>
    <property type="project" value="UniProtKB-ARBA"/>
</dbReference>
<dbReference type="GO" id="GO:0003746">
    <property type="term" value="F:translation elongation factor activity"/>
    <property type="evidence" value="ECO:0007669"/>
    <property type="project" value="UniProtKB-UniRule"/>
</dbReference>
<dbReference type="GO" id="GO:0032790">
    <property type="term" value="P:ribosome disassembly"/>
    <property type="evidence" value="ECO:0007669"/>
    <property type="project" value="TreeGrafter"/>
</dbReference>
<dbReference type="CDD" id="cd01886">
    <property type="entry name" value="EF-G"/>
    <property type="match status" value="1"/>
</dbReference>
<dbReference type="CDD" id="cd16262">
    <property type="entry name" value="EFG_III"/>
    <property type="match status" value="1"/>
</dbReference>
<dbReference type="CDD" id="cd01434">
    <property type="entry name" value="EFG_mtEFG1_IV"/>
    <property type="match status" value="1"/>
</dbReference>
<dbReference type="CDD" id="cd03713">
    <property type="entry name" value="EFG_mtEFG_C"/>
    <property type="match status" value="1"/>
</dbReference>
<dbReference type="CDD" id="cd04088">
    <property type="entry name" value="EFG_mtEFG_II"/>
    <property type="match status" value="1"/>
</dbReference>
<dbReference type="FunFam" id="2.40.30.10:FF:000006">
    <property type="entry name" value="Elongation factor G"/>
    <property type="match status" value="1"/>
</dbReference>
<dbReference type="FunFam" id="3.30.230.10:FF:000003">
    <property type="entry name" value="Elongation factor G"/>
    <property type="match status" value="1"/>
</dbReference>
<dbReference type="FunFam" id="3.30.70.240:FF:000001">
    <property type="entry name" value="Elongation factor G"/>
    <property type="match status" value="1"/>
</dbReference>
<dbReference type="FunFam" id="3.30.70.870:FF:000001">
    <property type="entry name" value="Elongation factor G"/>
    <property type="match status" value="1"/>
</dbReference>
<dbReference type="FunFam" id="3.40.50.300:FF:000029">
    <property type="entry name" value="Elongation factor G"/>
    <property type="match status" value="1"/>
</dbReference>
<dbReference type="Gene3D" id="3.30.230.10">
    <property type="match status" value="1"/>
</dbReference>
<dbReference type="Gene3D" id="3.30.70.240">
    <property type="match status" value="1"/>
</dbReference>
<dbReference type="Gene3D" id="3.30.70.870">
    <property type="entry name" value="Elongation Factor G (Translational Gtpase), domain 3"/>
    <property type="match status" value="1"/>
</dbReference>
<dbReference type="Gene3D" id="3.40.50.300">
    <property type="entry name" value="P-loop containing nucleotide triphosphate hydrolases"/>
    <property type="match status" value="1"/>
</dbReference>
<dbReference type="Gene3D" id="2.40.30.10">
    <property type="entry name" value="Translation factors"/>
    <property type="match status" value="1"/>
</dbReference>
<dbReference type="HAMAP" id="MF_00054_B">
    <property type="entry name" value="EF_G_EF_2_B"/>
    <property type="match status" value="1"/>
</dbReference>
<dbReference type="InterPro" id="IPR041095">
    <property type="entry name" value="EFG_II"/>
</dbReference>
<dbReference type="InterPro" id="IPR009022">
    <property type="entry name" value="EFG_III"/>
</dbReference>
<dbReference type="InterPro" id="IPR035647">
    <property type="entry name" value="EFG_III/V"/>
</dbReference>
<dbReference type="InterPro" id="IPR047872">
    <property type="entry name" value="EFG_IV"/>
</dbReference>
<dbReference type="InterPro" id="IPR035649">
    <property type="entry name" value="EFG_V"/>
</dbReference>
<dbReference type="InterPro" id="IPR000640">
    <property type="entry name" value="EFG_V-like"/>
</dbReference>
<dbReference type="InterPro" id="IPR004161">
    <property type="entry name" value="EFTu-like_2"/>
</dbReference>
<dbReference type="InterPro" id="IPR031157">
    <property type="entry name" value="G_TR_CS"/>
</dbReference>
<dbReference type="InterPro" id="IPR027417">
    <property type="entry name" value="P-loop_NTPase"/>
</dbReference>
<dbReference type="InterPro" id="IPR020568">
    <property type="entry name" value="Ribosomal_Su5_D2-typ_SF"/>
</dbReference>
<dbReference type="InterPro" id="IPR014721">
    <property type="entry name" value="Ribsml_uS5_D2-typ_fold_subgr"/>
</dbReference>
<dbReference type="InterPro" id="IPR005225">
    <property type="entry name" value="Small_GTP-bd"/>
</dbReference>
<dbReference type="InterPro" id="IPR000795">
    <property type="entry name" value="T_Tr_GTP-bd_dom"/>
</dbReference>
<dbReference type="InterPro" id="IPR009000">
    <property type="entry name" value="Transl_B-barrel_sf"/>
</dbReference>
<dbReference type="InterPro" id="IPR004540">
    <property type="entry name" value="Transl_elong_EFG/EF2"/>
</dbReference>
<dbReference type="InterPro" id="IPR005517">
    <property type="entry name" value="Transl_elong_EFG/EF2_IV"/>
</dbReference>
<dbReference type="NCBIfam" id="TIGR00484">
    <property type="entry name" value="EF-G"/>
    <property type="match status" value="1"/>
</dbReference>
<dbReference type="NCBIfam" id="NF009381">
    <property type="entry name" value="PRK12740.1-5"/>
    <property type="match status" value="1"/>
</dbReference>
<dbReference type="NCBIfam" id="TIGR00231">
    <property type="entry name" value="small_GTP"/>
    <property type="match status" value="1"/>
</dbReference>
<dbReference type="PANTHER" id="PTHR43261:SF1">
    <property type="entry name" value="RIBOSOME-RELEASING FACTOR 2, MITOCHONDRIAL"/>
    <property type="match status" value="1"/>
</dbReference>
<dbReference type="PANTHER" id="PTHR43261">
    <property type="entry name" value="TRANSLATION ELONGATION FACTOR G-RELATED"/>
    <property type="match status" value="1"/>
</dbReference>
<dbReference type="Pfam" id="PF00679">
    <property type="entry name" value="EFG_C"/>
    <property type="match status" value="1"/>
</dbReference>
<dbReference type="Pfam" id="PF14492">
    <property type="entry name" value="EFG_III"/>
    <property type="match status" value="1"/>
</dbReference>
<dbReference type="Pfam" id="PF03764">
    <property type="entry name" value="EFG_IV"/>
    <property type="match status" value="1"/>
</dbReference>
<dbReference type="Pfam" id="PF00009">
    <property type="entry name" value="GTP_EFTU"/>
    <property type="match status" value="1"/>
</dbReference>
<dbReference type="Pfam" id="PF03144">
    <property type="entry name" value="GTP_EFTU_D2"/>
    <property type="match status" value="1"/>
</dbReference>
<dbReference type="PRINTS" id="PR00315">
    <property type="entry name" value="ELONGATNFCT"/>
</dbReference>
<dbReference type="SMART" id="SM00838">
    <property type="entry name" value="EFG_C"/>
    <property type="match status" value="1"/>
</dbReference>
<dbReference type="SMART" id="SM00889">
    <property type="entry name" value="EFG_IV"/>
    <property type="match status" value="1"/>
</dbReference>
<dbReference type="SUPFAM" id="SSF54980">
    <property type="entry name" value="EF-G C-terminal domain-like"/>
    <property type="match status" value="2"/>
</dbReference>
<dbReference type="SUPFAM" id="SSF52540">
    <property type="entry name" value="P-loop containing nucleoside triphosphate hydrolases"/>
    <property type="match status" value="1"/>
</dbReference>
<dbReference type="SUPFAM" id="SSF54211">
    <property type="entry name" value="Ribosomal protein S5 domain 2-like"/>
    <property type="match status" value="1"/>
</dbReference>
<dbReference type="SUPFAM" id="SSF50447">
    <property type="entry name" value="Translation proteins"/>
    <property type="match status" value="1"/>
</dbReference>
<dbReference type="PROSITE" id="PS00301">
    <property type="entry name" value="G_TR_1"/>
    <property type="match status" value="1"/>
</dbReference>
<dbReference type="PROSITE" id="PS51722">
    <property type="entry name" value="G_TR_2"/>
    <property type="match status" value="1"/>
</dbReference>
<organism>
    <name type="scientific">Brucella suis biovar 1 (strain 1330)</name>
    <dbReference type="NCBI Taxonomy" id="204722"/>
    <lineage>
        <taxon>Bacteria</taxon>
        <taxon>Pseudomonadati</taxon>
        <taxon>Pseudomonadota</taxon>
        <taxon>Alphaproteobacteria</taxon>
        <taxon>Hyphomicrobiales</taxon>
        <taxon>Brucellaceae</taxon>
        <taxon>Brucella/Ochrobactrum group</taxon>
        <taxon>Brucella</taxon>
    </lineage>
</organism>
<evidence type="ECO:0000255" key="1">
    <source>
        <dbReference type="HAMAP-Rule" id="MF_00054"/>
    </source>
</evidence>
<proteinExistence type="inferred from homology"/>
<keyword id="KW-0963">Cytoplasm</keyword>
<keyword id="KW-0251">Elongation factor</keyword>
<keyword id="KW-0342">GTP-binding</keyword>
<keyword id="KW-0547">Nucleotide-binding</keyword>
<keyword id="KW-0648">Protein biosynthesis</keyword>
<gene>
    <name evidence="1" type="primary">fusA</name>
    <name type="ordered locus">BR1236</name>
    <name type="ordered locus">BS1330_I1232</name>
</gene>
<protein>
    <recommendedName>
        <fullName evidence="1">Elongation factor G</fullName>
        <shortName evidence="1">EF-G</shortName>
    </recommendedName>
</protein>
<name>EFG_BRUSU</name>
<accession>Q8G075</accession>
<accession>G0KAF7</accession>
<sequence>MAREYKIEDYRNFGIMAHIDAGKTTMTERILFYTGKNHKIGETHDGASTMDWMEQEQERGITITSAATTTFWQGRDGKKRRFNIIDTPGHVDFTIEVERSLRVLDGAIALLDANAGVEPQTETVWRQAEKYHVPRMVFVNKMDKIGADFYRSVEMVGSRLGAVALPVQLPIGAENDFVGVVDLIEMKALTWDGTIGAPATVGEIPADMADKAEEYREKLIELAVEIDEAAMEAYLEGTMPTNDELRALIRKGTIEVKFHPILCGTAFKNRGVQPLLDAVVEFLPAPTDVPAIKGIDVKTETETTRESSDEAPLSMLAFKIMNDPFVGSLTFARIYSGKLTKGVSLENTVKGKRERIGRMLQMHSNSREDIDEAFAGDIVALAGLKETTTGDTLCDPLKPVILERMEFPDPVIEIAIEPKTKADQEKMGIALNRLAAEDPSFRVKSDEESGQTIIAGMGELHLDILVDRMKREFKVEANVGAPQVAYRESITRAAEIDYTHKKQSGGSGQFARVKIIFEPHDGDDFIFESKIVGGSVPKEYIPGVQKGIESVMGAGPLAGFPMLGVKATLIDGAYHDVDSSVLAFEIASRAAFREGAQKAGAQLLEPIMKVEVVTPEDYVGDVIGDLNSRRGQISGTEARGIATVVNAMVPLANMFGYVNSLRSMSQGRAQYTMQFDHYEPVPTAVAQEIQKKFA</sequence>
<reference key="1">
    <citation type="journal article" date="2002" name="Proc. Natl. Acad. Sci. U.S.A.">
        <title>The Brucella suis genome reveals fundamental similarities between animal and plant pathogens and symbionts.</title>
        <authorList>
            <person name="Paulsen I.T."/>
            <person name="Seshadri R."/>
            <person name="Nelson K.E."/>
            <person name="Eisen J.A."/>
            <person name="Heidelberg J.F."/>
            <person name="Read T.D."/>
            <person name="Dodson R.J."/>
            <person name="Umayam L.A."/>
            <person name="Brinkac L.M."/>
            <person name="Beanan M.J."/>
            <person name="Daugherty S.C."/>
            <person name="DeBoy R.T."/>
            <person name="Durkin A.S."/>
            <person name="Kolonay J.F."/>
            <person name="Madupu R."/>
            <person name="Nelson W.C."/>
            <person name="Ayodeji B."/>
            <person name="Kraul M."/>
            <person name="Shetty J."/>
            <person name="Malek J.A."/>
            <person name="Van Aken S.E."/>
            <person name="Riedmuller S."/>
            <person name="Tettelin H."/>
            <person name="Gill S.R."/>
            <person name="White O."/>
            <person name="Salzberg S.L."/>
            <person name="Hoover D.L."/>
            <person name="Lindler L.E."/>
            <person name="Halling S.M."/>
            <person name="Boyle S.M."/>
            <person name="Fraser C.M."/>
        </authorList>
    </citation>
    <scope>NUCLEOTIDE SEQUENCE [LARGE SCALE GENOMIC DNA]</scope>
    <source>
        <strain>1330</strain>
    </source>
</reference>
<reference key="2">
    <citation type="journal article" date="2011" name="J. Bacteriol.">
        <title>Revised genome sequence of Brucella suis 1330.</title>
        <authorList>
            <person name="Tae H."/>
            <person name="Shallom S."/>
            <person name="Settlage R."/>
            <person name="Preston D."/>
            <person name="Adams L.G."/>
            <person name="Garner H.R."/>
        </authorList>
    </citation>
    <scope>NUCLEOTIDE SEQUENCE [LARGE SCALE GENOMIC DNA]</scope>
    <source>
        <strain>1330</strain>
    </source>
</reference>